<name>RNPH_HALHL</name>
<proteinExistence type="inferred from homology"/>
<organism>
    <name type="scientific">Halorhodospira halophila (strain DSM 244 / SL1)</name>
    <name type="common">Ectothiorhodospira halophila (strain DSM 244 / SL1)</name>
    <dbReference type="NCBI Taxonomy" id="349124"/>
    <lineage>
        <taxon>Bacteria</taxon>
        <taxon>Pseudomonadati</taxon>
        <taxon>Pseudomonadota</taxon>
        <taxon>Gammaproteobacteria</taxon>
        <taxon>Chromatiales</taxon>
        <taxon>Ectothiorhodospiraceae</taxon>
        <taxon>Halorhodospira</taxon>
    </lineage>
</organism>
<dbReference type="EC" id="2.7.7.56" evidence="1"/>
<dbReference type="EMBL" id="CP000544">
    <property type="protein sequence ID" value="ABM61749.1"/>
    <property type="molecule type" value="Genomic_DNA"/>
</dbReference>
<dbReference type="RefSeq" id="WP_011813772.1">
    <property type="nucleotide sequence ID" value="NC_008789.1"/>
</dbReference>
<dbReference type="SMR" id="A1WVN7"/>
<dbReference type="STRING" id="349124.Hhal_0973"/>
<dbReference type="KEGG" id="hha:Hhal_0973"/>
<dbReference type="eggNOG" id="COG0689">
    <property type="taxonomic scope" value="Bacteria"/>
</dbReference>
<dbReference type="HOGENOM" id="CLU_050858_0_0_6"/>
<dbReference type="OrthoDB" id="9802265at2"/>
<dbReference type="Proteomes" id="UP000000647">
    <property type="component" value="Chromosome"/>
</dbReference>
<dbReference type="GO" id="GO:0000175">
    <property type="term" value="F:3'-5'-RNA exonuclease activity"/>
    <property type="evidence" value="ECO:0007669"/>
    <property type="project" value="UniProtKB-UniRule"/>
</dbReference>
<dbReference type="GO" id="GO:0000049">
    <property type="term" value="F:tRNA binding"/>
    <property type="evidence" value="ECO:0007669"/>
    <property type="project" value="UniProtKB-UniRule"/>
</dbReference>
<dbReference type="GO" id="GO:0009022">
    <property type="term" value="F:tRNA nucleotidyltransferase activity"/>
    <property type="evidence" value="ECO:0007669"/>
    <property type="project" value="UniProtKB-UniRule"/>
</dbReference>
<dbReference type="GO" id="GO:0016075">
    <property type="term" value="P:rRNA catabolic process"/>
    <property type="evidence" value="ECO:0007669"/>
    <property type="project" value="UniProtKB-UniRule"/>
</dbReference>
<dbReference type="GO" id="GO:0006364">
    <property type="term" value="P:rRNA processing"/>
    <property type="evidence" value="ECO:0007669"/>
    <property type="project" value="UniProtKB-KW"/>
</dbReference>
<dbReference type="GO" id="GO:0008033">
    <property type="term" value="P:tRNA processing"/>
    <property type="evidence" value="ECO:0007669"/>
    <property type="project" value="UniProtKB-UniRule"/>
</dbReference>
<dbReference type="CDD" id="cd11362">
    <property type="entry name" value="RNase_PH_bact"/>
    <property type="match status" value="1"/>
</dbReference>
<dbReference type="FunFam" id="3.30.230.70:FF:000003">
    <property type="entry name" value="Ribonuclease PH"/>
    <property type="match status" value="1"/>
</dbReference>
<dbReference type="Gene3D" id="3.30.230.70">
    <property type="entry name" value="GHMP Kinase, N-terminal domain"/>
    <property type="match status" value="1"/>
</dbReference>
<dbReference type="HAMAP" id="MF_00564">
    <property type="entry name" value="RNase_PH"/>
    <property type="match status" value="1"/>
</dbReference>
<dbReference type="InterPro" id="IPR001247">
    <property type="entry name" value="ExoRNase_PH_dom1"/>
</dbReference>
<dbReference type="InterPro" id="IPR015847">
    <property type="entry name" value="ExoRNase_PH_dom2"/>
</dbReference>
<dbReference type="InterPro" id="IPR036345">
    <property type="entry name" value="ExoRNase_PH_dom2_sf"/>
</dbReference>
<dbReference type="InterPro" id="IPR027408">
    <property type="entry name" value="PNPase/RNase_PH_dom_sf"/>
</dbReference>
<dbReference type="InterPro" id="IPR020568">
    <property type="entry name" value="Ribosomal_Su5_D2-typ_SF"/>
</dbReference>
<dbReference type="InterPro" id="IPR050080">
    <property type="entry name" value="RNase_PH"/>
</dbReference>
<dbReference type="InterPro" id="IPR002381">
    <property type="entry name" value="RNase_PH_bac-type"/>
</dbReference>
<dbReference type="InterPro" id="IPR018336">
    <property type="entry name" value="RNase_PH_CS"/>
</dbReference>
<dbReference type="NCBIfam" id="TIGR01966">
    <property type="entry name" value="RNasePH"/>
    <property type="match status" value="1"/>
</dbReference>
<dbReference type="PANTHER" id="PTHR11953">
    <property type="entry name" value="EXOSOME COMPLEX COMPONENT"/>
    <property type="match status" value="1"/>
</dbReference>
<dbReference type="PANTHER" id="PTHR11953:SF0">
    <property type="entry name" value="EXOSOME COMPLEX COMPONENT RRP41"/>
    <property type="match status" value="1"/>
</dbReference>
<dbReference type="Pfam" id="PF01138">
    <property type="entry name" value="RNase_PH"/>
    <property type="match status" value="1"/>
</dbReference>
<dbReference type="Pfam" id="PF03725">
    <property type="entry name" value="RNase_PH_C"/>
    <property type="match status" value="1"/>
</dbReference>
<dbReference type="SUPFAM" id="SSF55666">
    <property type="entry name" value="Ribonuclease PH domain 2-like"/>
    <property type="match status" value="1"/>
</dbReference>
<dbReference type="SUPFAM" id="SSF54211">
    <property type="entry name" value="Ribosomal protein S5 domain 2-like"/>
    <property type="match status" value="1"/>
</dbReference>
<dbReference type="PROSITE" id="PS01277">
    <property type="entry name" value="RIBONUCLEASE_PH"/>
    <property type="match status" value="1"/>
</dbReference>
<feature type="chain" id="PRO_1000024819" description="Ribonuclease PH">
    <location>
        <begin position="1"/>
        <end position="238"/>
    </location>
</feature>
<feature type="binding site" evidence="1">
    <location>
        <position position="86"/>
    </location>
    <ligand>
        <name>phosphate</name>
        <dbReference type="ChEBI" id="CHEBI:43474"/>
        <note>substrate</note>
    </ligand>
</feature>
<feature type="binding site" evidence="1">
    <location>
        <begin position="124"/>
        <end position="126"/>
    </location>
    <ligand>
        <name>phosphate</name>
        <dbReference type="ChEBI" id="CHEBI:43474"/>
        <note>substrate</note>
    </ligand>
</feature>
<protein>
    <recommendedName>
        <fullName evidence="1">Ribonuclease PH</fullName>
        <shortName evidence="1">RNase PH</shortName>
        <ecNumber evidence="1">2.7.7.56</ecNumber>
    </recommendedName>
    <alternativeName>
        <fullName evidence="1">tRNA nucleotidyltransferase</fullName>
    </alternativeName>
</protein>
<keyword id="KW-0548">Nucleotidyltransferase</keyword>
<keyword id="KW-1185">Reference proteome</keyword>
<keyword id="KW-0694">RNA-binding</keyword>
<keyword id="KW-0698">rRNA processing</keyword>
<keyword id="KW-0808">Transferase</keyword>
<keyword id="KW-0819">tRNA processing</keyword>
<keyword id="KW-0820">tRNA-binding</keyword>
<gene>
    <name evidence="1" type="primary">rph</name>
    <name type="ordered locus">Hhal_0973</name>
</gene>
<comment type="function">
    <text evidence="1">Phosphorolytic 3'-5' exoribonuclease that plays an important role in tRNA 3'-end maturation. Removes nucleotide residues following the 3'-CCA terminus of tRNAs; can also add nucleotides to the ends of RNA molecules by using nucleoside diphosphates as substrates, but this may not be physiologically important. Probably plays a role in initiation of 16S rRNA degradation (leading to ribosome degradation) during starvation.</text>
</comment>
<comment type="catalytic activity">
    <reaction evidence="1">
        <text>tRNA(n+1) + phosphate = tRNA(n) + a ribonucleoside 5'-diphosphate</text>
        <dbReference type="Rhea" id="RHEA:10628"/>
        <dbReference type="Rhea" id="RHEA-COMP:17343"/>
        <dbReference type="Rhea" id="RHEA-COMP:17344"/>
        <dbReference type="ChEBI" id="CHEBI:43474"/>
        <dbReference type="ChEBI" id="CHEBI:57930"/>
        <dbReference type="ChEBI" id="CHEBI:173114"/>
        <dbReference type="EC" id="2.7.7.56"/>
    </reaction>
</comment>
<comment type="subunit">
    <text evidence="1">Homohexameric ring arranged as a trimer of dimers.</text>
</comment>
<comment type="similarity">
    <text evidence="1">Belongs to the RNase PH family.</text>
</comment>
<accession>A1WVN7</accession>
<sequence length="238" mass="25753">MRPSGRRADELRPISIQRQFTKHAEGSVLIGFGDTRVLCTASVEARVPPWLRGQGRGWVTAEYGMLPRSTHTRSDREAARGKQQGRTVEIQRLIGRSLRAAVDLQALGERSVVVDCDVLQADGGTRTAAITGAFVALTDALEGLVRQRALPASPLHGQVASVSVGVYRGEPVLDLDYAEDGEAETDMNVVMNDAGAFIELQGTAEGHAFRRDELDRMLALAEKGVGELLQHQQEALAT</sequence>
<evidence type="ECO:0000255" key="1">
    <source>
        <dbReference type="HAMAP-Rule" id="MF_00564"/>
    </source>
</evidence>
<reference key="1">
    <citation type="submission" date="2006-12" db="EMBL/GenBank/DDBJ databases">
        <title>Complete sequence of Halorhodospira halophila SL1.</title>
        <authorList>
            <consortium name="US DOE Joint Genome Institute"/>
            <person name="Copeland A."/>
            <person name="Lucas S."/>
            <person name="Lapidus A."/>
            <person name="Barry K."/>
            <person name="Detter J.C."/>
            <person name="Glavina del Rio T."/>
            <person name="Hammon N."/>
            <person name="Israni S."/>
            <person name="Dalin E."/>
            <person name="Tice H."/>
            <person name="Pitluck S."/>
            <person name="Saunders E."/>
            <person name="Brettin T."/>
            <person name="Bruce D."/>
            <person name="Han C."/>
            <person name="Tapia R."/>
            <person name="Schmutz J."/>
            <person name="Larimer F."/>
            <person name="Land M."/>
            <person name="Hauser L."/>
            <person name="Kyrpides N."/>
            <person name="Mikhailova N."/>
            <person name="Hoff W."/>
            <person name="Richardson P."/>
        </authorList>
    </citation>
    <scope>NUCLEOTIDE SEQUENCE [LARGE SCALE GENOMIC DNA]</scope>
    <source>
        <strain>DSM 244 / SL1</strain>
    </source>
</reference>